<name>Y675_SYNP6</name>
<feature type="chain" id="PRO_0000261979" description="Nucleotide-binding protein syc0675_c">
    <location>
        <begin position="1"/>
        <end position="163"/>
    </location>
</feature>
<keyword id="KW-0547">Nucleotide-binding</keyword>
<accession>Q5N4A4</accession>
<gene>
    <name type="ordered locus">syc0675_c</name>
</gene>
<comment type="function">
    <text evidence="1">Nucleotide-binding protein.</text>
</comment>
<comment type="similarity">
    <text evidence="1">Belongs to the YajQ family.</text>
</comment>
<protein>
    <recommendedName>
        <fullName evidence="1">Nucleotide-binding protein syc0675_c</fullName>
    </recommendedName>
</protein>
<reference key="1">
    <citation type="journal article" date="2007" name="Photosyn. Res.">
        <title>Complete nucleotide sequence of the freshwater unicellular cyanobacterium Synechococcus elongatus PCC 6301 chromosome: gene content and organization.</title>
        <authorList>
            <person name="Sugita C."/>
            <person name="Ogata K."/>
            <person name="Shikata M."/>
            <person name="Jikuya H."/>
            <person name="Takano J."/>
            <person name="Furumichi M."/>
            <person name="Kanehisa M."/>
            <person name="Omata T."/>
            <person name="Sugiura M."/>
            <person name="Sugita M."/>
        </authorList>
    </citation>
    <scope>NUCLEOTIDE SEQUENCE [LARGE SCALE GENOMIC DNA]</scope>
    <source>
        <strain>ATCC 27144 / PCC 6301 / SAUG 1402/1</strain>
    </source>
</reference>
<evidence type="ECO:0000255" key="1">
    <source>
        <dbReference type="HAMAP-Rule" id="MF_00632"/>
    </source>
</evidence>
<sequence length="163" mass="18303">MATASSFDVVSDFDQQELVNAVDQARREITNRYDLKDSATTLELTAETLTINTDSEFSLDAVVTLLQTKVAKRNLSLKIFDFGKVETASGNRVRQVITLQRGLSSELAKDLSKQIRDQFKKVQVSIQGDALRVSAKSKDDLQTVIQYLKQQDVPAPLQFTNYR</sequence>
<organism>
    <name type="scientific">Synechococcus sp. (strain ATCC 27144 / PCC 6301 / SAUG 1402/1)</name>
    <name type="common">Anacystis nidulans</name>
    <dbReference type="NCBI Taxonomy" id="269084"/>
    <lineage>
        <taxon>Bacteria</taxon>
        <taxon>Bacillati</taxon>
        <taxon>Cyanobacteriota</taxon>
        <taxon>Cyanophyceae</taxon>
        <taxon>Synechococcales</taxon>
        <taxon>Synechococcaceae</taxon>
        <taxon>Synechococcus</taxon>
    </lineage>
</organism>
<dbReference type="EMBL" id="AP008231">
    <property type="protein sequence ID" value="BAD78865.1"/>
    <property type="molecule type" value="Genomic_DNA"/>
</dbReference>
<dbReference type="RefSeq" id="WP_011242987.1">
    <property type="nucleotide sequence ID" value="NZ_CP085785.1"/>
</dbReference>
<dbReference type="SMR" id="Q5N4A4"/>
<dbReference type="KEGG" id="syc:syc0675_c"/>
<dbReference type="eggNOG" id="COG1666">
    <property type="taxonomic scope" value="Bacteria"/>
</dbReference>
<dbReference type="Proteomes" id="UP000001175">
    <property type="component" value="Chromosome"/>
</dbReference>
<dbReference type="GO" id="GO:0005829">
    <property type="term" value="C:cytosol"/>
    <property type="evidence" value="ECO:0007669"/>
    <property type="project" value="TreeGrafter"/>
</dbReference>
<dbReference type="GO" id="GO:0000166">
    <property type="term" value="F:nucleotide binding"/>
    <property type="evidence" value="ECO:0007669"/>
    <property type="project" value="TreeGrafter"/>
</dbReference>
<dbReference type="CDD" id="cd11740">
    <property type="entry name" value="YajQ_like"/>
    <property type="match status" value="1"/>
</dbReference>
<dbReference type="Gene3D" id="3.30.70.860">
    <property type="match status" value="1"/>
</dbReference>
<dbReference type="Gene3D" id="3.30.70.990">
    <property type="entry name" value="YajQ-like, domain 2"/>
    <property type="match status" value="1"/>
</dbReference>
<dbReference type="HAMAP" id="MF_00632">
    <property type="entry name" value="YajQ"/>
    <property type="match status" value="1"/>
</dbReference>
<dbReference type="InterPro" id="IPR007551">
    <property type="entry name" value="DUF520"/>
</dbReference>
<dbReference type="InterPro" id="IPR035571">
    <property type="entry name" value="UPF0234-like_C"/>
</dbReference>
<dbReference type="InterPro" id="IPR035570">
    <property type="entry name" value="UPF0234_N"/>
</dbReference>
<dbReference type="InterPro" id="IPR036183">
    <property type="entry name" value="YajQ-like_sf"/>
</dbReference>
<dbReference type="NCBIfam" id="NF003819">
    <property type="entry name" value="PRK05412.1"/>
    <property type="match status" value="1"/>
</dbReference>
<dbReference type="PANTHER" id="PTHR30476">
    <property type="entry name" value="UPF0234 PROTEIN YAJQ"/>
    <property type="match status" value="1"/>
</dbReference>
<dbReference type="PANTHER" id="PTHR30476:SF0">
    <property type="entry name" value="UPF0234 PROTEIN YAJQ"/>
    <property type="match status" value="1"/>
</dbReference>
<dbReference type="Pfam" id="PF04461">
    <property type="entry name" value="DUF520"/>
    <property type="match status" value="1"/>
</dbReference>
<dbReference type="SUPFAM" id="SSF89963">
    <property type="entry name" value="YajQ-like"/>
    <property type="match status" value="2"/>
</dbReference>
<proteinExistence type="inferred from homology"/>